<feature type="chain" id="PRO_0000164421" description="Putative N-acetylmuramoyl-L-alanine amidase">
    <location>
        <begin position="1"/>
        <end position="237"/>
    </location>
</feature>
<feature type="domain" description="MurNAc-LAA" evidence="2">
    <location>
        <begin position="7"/>
        <end position="225"/>
    </location>
</feature>
<gene>
    <name type="primary">amiB</name>
    <name type="ordered locus">BU576</name>
</gene>
<protein>
    <recommendedName>
        <fullName>Putative N-acetylmuramoyl-L-alanine amidase</fullName>
        <ecNumber>3.5.1.28</ecNumber>
    </recommendedName>
</protein>
<comment type="function">
    <text evidence="1">Cell-wall hydrolase involved in septum cleavage during cell division.</text>
</comment>
<comment type="catalytic activity">
    <reaction>
        <text>Hydrolyzes the link between N-acetylmuramoyl residues and L-amino acid residues in certain cell-wall glycopeptides.</text>
        <dbReference type="EC" id="3.5.1.28"/>
    </reaction>
</comment>
<comment type="subcellular location">
    <subcellularLocation>
        <location evidence="3">Secreted</location>
    </subcellularLocation>
</comment>
<comment type="similarity">
    <text evidence="3">Belongs to the N-acetylmuramoyl-L-alanine amidase 3 family.</text>
</comment>
<dbReference type="EC" id="3.5.1.28"/>
<dbReference type="EMBL" id="BA000003">
    <property type="protein sequence ID" value="BAB13265.1"/>
    <property type="molecule type" value="Genomic_DNA"/>
</dbReference>
<dbReference type="RefSeq" id="NP_240379.1">
    <property type="nucleotide sequence ID" value="NC_002528.1"/>
</dbReference>
<dbReference type="RefSeq" id="WP_009874524.1">
    <property type="nucleotide sequence ID" value="NZ_AP036055.1"/>
</dbReference>
<dbReference type="SMR" id="P57638"/>
<dbReference type="EnsemblBacteria" id="BAB13265">
    <property type="protein sequence ID" value="BAB13265"/>
    <property type="gene ID" value="BAB13265"/>
</dbReference>
<dbReference type="KEGG" id="buc:BU576"/>
<dbReference type="PATRIC" id="fig|107806.10.peg.580"/>
<dbReference type="eggNOG" id="COG0860">
    <property type="taxonomic scope" value="Bacteria"/>
</dbReference>
<dbReference type="HOGENOM" id="CLU_014322_4_1_6"/>
<dbReference type="Proteomes" id="UP000001806">
    <property type="component" value="Chromosome"/>
</dbReference>
<dbReference type="GO" id="GO:0005576">
    <property type="term" value="C:extracellular region"/>
    <property type="evidence" value="ECO:0007669"/>
    <property type="project" value="UniProtKB-SubCell"/>
</dbReference>
<dbReference type="GO" id="GO:0030288">
    <property type="term" value="C:outer membrane-bounded periplasmic space"/>
    <property type="evidence" value="ECO:0007669"/>
    <property type="project" value="TreeGrafter"/>
</dbReference>
<dbReference type="GO" id="GO:0008745">
    <property type="term" value="F:N-acetylmuramoyl-L-alanine amidase activity"/>
    <property type="evidence" value="ECO:0007669"/>
    <property type="project" value="UniProtKB-EC"/>
</dbReference>
<dbReference type="GO" id="GO:0071555">
    <property type="term" value="P:cell wall organization"/>
    <property type="evidence" value="ECO:0007669"/>
    <property type="project" value="UniProtKB-KW"/>
</dbReference>
<dbReference type="GO" id="GO:0009253">
    <property type="term" value="P:peptidoglycan catabolic process"/>
    <property type="evidence" value="ECO:0007669"/>
    <property type="project" value="InterPro"/>
</dbReference>
<dbReference type="CDD" id="cd02696">
    <property type="entry name" value="MurNAc-LAA"/>
    <property type="match status" value="1"/>
</dbReference>
<dbReference type="Gene3D" id="3.40.630.40">
    <property type="entry name" value="Zn-dependent exopeptidases"/>
    <property type="match status" value="1"/>
</dbReference>
<dbReference type="InterPro" id="IPR002508">
    <property type="entry name" value="MurNAc-LAA_cat"/>
</dbReference>
<dbReference type="InterPro" id="IPR050695">
    <property type="entry name" value="N-acetylmuramoyl_amidase_3"/>
</dbReference>
<dbReference type="PANTHER" id="PTHR30404">
    <property type="entry name" value="N-ACETYLMURAMOYL-L-ALANINE AMIDASE"/>
    <property type="match status" value="1"/>
</dbReference>
<dbReference type="PANTHER" id="PTHR30404:SF6">
    <property type="entry name" value="N-ACETYLMURAMOYL-L-ALANINE AMIDASE AMIB"/>
    <property type="match status" value="1"/>
</dbReference>
<dbReference type="Pfam" id="PF01520">
    <property type="entry name" value="Amidase_3"/>
    <property type="match status" value="1"/>
</dbReference>
<dbReference type="SMART" id="SM00646">
    <property type="entry name" value="Ami_3"/>
    <property type="match status" value="1"/>
</dbReference>
<dbReference type="SUPFAM" id="SSF53187">
    <property type="entry name" value="Zn-dependent exopeptidases"/>
    <property type="match status" value="1"/>
</dbReference>
<keyword id="KW-0961">Cell wall biogenesis/degradation</keyword>
<keyword id="KW-0378">Hydrolase</keyword>
<keyword id="KW-1185">Reference proteome</keyword>
<keyword id="KW-0964">Secreted</keyword>
<name>AMIB_BUCAI</name>
<sequence length="237" mass="27240">MSKKITILIDAGHGGYDPGAIGIRGLKEKNINIEIALKLEKLLNHDKMFCTILTRHNDSYLSLKKRKQLLKKNQVNFLISIHADSSRKQNVSGASIWIVSKTRINREINNYLKNKSTLLFSKKIENIFKQNKNDFFLKKTILDLQSNNFQKIELDLSKEILKQLEKNTKLNKKYPNYASLGILSSINTPSILIETGFITNILEGKKLKTTNYQNKIANSIYLGLKNYFTKSSYILKK</sequence>
<reference key="1">
    <citation type="journal article" date="2000" name="Nature">
        <title>Genome sequence of the endocellular bacterial symbiont of aphids Buchnera sp. APS.</title>
        <authorList>
            <person name="Shigenobu S."/>
            <person name="Watanabe H."/>
            <person name="Hattori M."/>
            <person name="Sakaki Y."/>
            <person name="Ishikawa H."/>
        </authorList>
    </citation>
    <scope>NUCLEOTIDE SEQUENCE [LARGE SCALE GENOMIC DNA]</scope>
    <source>
        <strain>APS</strain>
    </source>
</reference>
<proteinExistence type="inferred from homology"/>
<organism>
    <name type="scientific">Buchnera aphidicola subsp. Acyrthosiphon pisum (strain APS)</name>
    <name type="common">Acyrthosiphon pisum symbiotic bacterium</name>
    <dbReference type="NCBI Taxonomy" id="107806"/>
    <lineage>
        <taxon>Bacteria</taxon>
        <taxon>Pseudomonadati</taxon>
        <taxon>Pseudomonadota</taxon>
        <taxon>Gammaproteobacteria</taxon>
        <taxon>Enterobacterales</taxon>
        <taxon>Erwiniaceae</taxon>
        <taxon>Buchnera</taxon>
    </lineage>
</organism>
<accession>P57638</accession>
<evidence type="ECO:0000250" key="1"/>
<evidence type="ECO:0000255" key="2"/>
<evidence type="ECO:0000305" key="3"/>